<name>GLMU_BAUCH</name>
<proteinExistence type="inferred from homology"/>
<accession>Q1LTV6</accession>
<evidence type="ECO:0000255" key="1">
    <source>
        <dbReference type="HAMAP-Rule" id="MF_01631"/>
    </source>
</evidence>
<gene>
    <name evidence="1" type="primary">glmU</name>
    <name type="ordered locus">BCI_0139</name>
</gene>
<organism>
    <name type="scientific">Baumannia cicadellinicola subsp. Homalodisca coagulata</name>
    <dbReference type="NCBI Taxonomy" id="374463"/>
    <lineage>
        <taxon>Bacteria</taxon>
        <taxon>Pseudomonadati</taxon>
        <taxon>Pseudomonadota</taxon>
        <taxon>Gammaproteobacteria</taxon>
        <taxon>Candidatus Palibaumannia</taxon>
    </lineage>
</organism>
<sequence length="469" mass="51774">MLNIKLNIVILAAGKSTRMNSDIPKVLHLLAGKPILQYVIDTAIKLKAKCKSTNIYIVYGYKGELLQQKLAHKQKTFLHWIKQVEQSGTGHAVQQVLPFLGKDEEVLILYGDVPLISFQTLIHLLTTRSKQGLSLLTANLTNPDGYGRILYKEQEVVGIIEHQEANAQQKLISEINTGILAVSSNELKIWITKLTNNNSMNEFYLTDIIALAWQEGKKIHTIHPEKISEINGINDCAQLANLERLYQKEQAESLLRIGVIIADPNRFDLRGELKHGDNIFFDTNVLIEGQVSLGNQVTIGTGCIIKNTVIGDNVIIKPYSIIEEAHLANGSIVGPFAHLRPGSKIEENAYVGNFVEIKKSTLGKKSKVAHLSYIGDANIGKDVNIGAGTITCNYDGANKHQTIIGDNVFIGSDSQLIAPLTIGDGATIGAGTTVTSNVTSNEVIISRIRQFPIINWQRPKKKIRYNIIY</sequence>
<dbReference type="EC" id="2.7.7.23" evidence="1"/>
<dbReference type="EC" id="2.3.1.157" evidence="1"/>
<dbReference type="EMBL" id="CP000238">
    <property type="protein sequence ID" value="ABF13975.1"/>
    <property type="molecule type" value="Genomic_DNA"/>
</dbReference>
<dbReference type="RefSeq" id="WP_011520341.1">
    <property type="nucleotide sequence ID" value="NC_007984.1"/>
</dbReference>
<dbReference type="SMR" id="Q1LTV6"/>
<dbReference type="STRING" id="374463.BCI_0139"/>
<dbReference type="KEGG" id="bci:BCI_0139"/>
<dbReference type="HOGENOM" id="CLU_029499_15_2_6"/>
<dbReference type="OrthoDB" id="9775031at2"/>
<dbReference type="UniPathway" id="UPA00113">
    <property type="reaction ID" value="UER00532"/>
</dbReference>
<dbReference type="UniPathway" id="UPA00113">
    <property type="reaction ID" value="UER00533"/>
</dbReference>
<dbReference type="UniPathway" id="UPA00973"/>
<dbReference type="Proteomes" id="UP000002427">
    <property type="component" value="Chromosome"/>
</dbReference>
<dbReference type="GO" id="GO:0005737">
    <property type="term" value="C:cytoplasm"/>
    <property type="evidence" value="ECO:0007669"/>
    <property type="project" value="UniProtKB-SubCell"/>
</dbReference>
<dbReference type="GO" id="GO:0016020">
    <property type="term" value="C:membrane"/>
    <property type="evidence" value="ECO:0007669"/>
    <property type="project" value="GOC"/>
</dbReference>
<dbReference type="GO" id="GO:0019134">
    <property type="term" value="F:glucosamine-1-phosphate N-acetyltransferase activity"/>
    <property type="evidence" value="ECO:0007669"/>
    <property type="project" value="UniProtKB-UniRule"/>
</dbReference>
<dbReference type="GO" id="GO:0000287">
    <property type="term" value="F:magnesium ion binding"/>
    <property type="evidence" value="ECO:0007669"/>
    <property type="project" value="UniProtKB-UniRule"/>
</dbReference>
<dbReference type="GO" id="GO:0003977">
    <property type="term" value="F:UDP-N-acetylglucosamine diphosphorylase activity"/>
    <property type="evidence" value="ECO:0007669"/>
    <property type="project" value="UniProtKB-UniRule"/>
</dbReference>
<dbReference type="GO" id="GO:0000902">
    <property type="term" value="P:cell morphogenesis"/>
    <property type="evidence" value="ECO:0007669"/>
    <property type="project" value="UniProtKB-UniRule"/>
</dbReference>
<dbReference type="GO" id="GO:0071555">
    <property type="term" value="P:cell wall organization"/>
    <property type="evidence" value="ECO:0007669"/>
    <property type="project" value="UniProtKB-KW"/>
</dbReference>
<dbReference type="GO" id="GO:0009245">
    <property type="term" value="P:lipid A biosynthetic process"/>
    <property type="evidence" value="ECO:0007669"/>
    <property type="project" value="UniProtKB-UniRule"/>
</dbReference>
<dbReference type="GO" id="GO:0009252">
    <property type="term" value="P:peptidoglycan biosynthetic process"/>
    <property type="evidence" value="ECO:0007669"/>
    <property type="project" value="UniProtKB-UniRule"/>
</dbReference>
<dbReference type="GO" id="GO:0008360">
    <property type="term" value="P:regulation of cell shape"/>
    <property type="evidence" value="ECO:0007669"/>
    <property type="project" value="UniProtKB-KW"/>
</dbReference>
<dbReference type="GO" id="GO:0006048">
    <property type="term" value="P:UDP-N-acetylglucosamine biosynthetic process"/>
    <property type="evidence" value="ECO:0007669"/>
    <property type="project" value="UniProtKB-UniPathway"/>
</dbReference>
<dbReference type="CDD" id="cd02540">
    <property type="entry name" value="GT2_GlmU_N_bac"/>
    <property type="match status" value="1"/>
</dbReference>
<dbReference type="CDD" id="cd03353">
    <property type="entry name" value="LbH_GlmU_C"/>
    <property type="match status" value="1"/>
</dbReference>
<dbReference type="Gene3D" id="2.160.10.10">
    <property type="entry name" value="Hexapeptide repeat proteins"/>
    <property type="match status" value="1"/>
</dbReference>
<dbReference type="Gene3D" id="3.90.550.10">
    <property type="entry name" value="Spore Coat Polysaccharide Biosynthesis Protein SpsA, Chain A"/>
    <property type="match status" value="1"/>
</dbReference>
<dbReference type="HAMAP" id="MF_01631">
    <property type="entry name" value="GlmU"/>
    <property type="match status" value="1"/>
</dbReference>
<dbReference type="InterPro" id="IPR005882">
    <property type="entry name" value="Bifunctional_GlmU"/>
</dbReference>
<dbReference type="InterPro" id="IPR050065">
    <property type="entry name" value="GlmU-like"/>
</dbReference>
<dbReference type="InterPro" id="IPR038009">
    <property type="entry name" value="GlmU_C_LbH"/>
</dbReference>
<dbReference type="InterPro" id="IPR001451">
    <property type="entry name" value="Hexapep"/>
</dbReference>
<dbReference type="InterPro" id="IPR018357">
    <property type="entry name" value="Hexapep_transf_CS"/>
</dbReference>
<dbReference type="InterPro" id="IPR025877">
    <property type="entry name" value="MobA-like_NTP_Trfase"/>
</dbReference>
<dbReference type="InterPro" id="IPR029044">
    <property type="entry name" value="Nucleotide-diphossugar_trans"/>
</dbReference>
<dbReference type="InterPro" id="IPR011004">
    <property type="entry name" value="Trimer_LpxA-like_sf"/>
</dbReference>
<dbReference type="NCBIfam" id="TIGR01173">
    <property type="entry name" value="glmU"/>
    <property type="match status" value="1"/>
</dbReference>
<dbReference type="PANTHER" id="PTHR43584:SF3">
    <property type="entry name" value="BIFUNCTIONAL PROTEIN GLMU"/>
    <property type="match status" value="1"/>
</dbReference>
<dbReference type="PANTHER" id="PTHR43584">
    <property type="entry name" value="NUCLEOTIDYL TRANSFERASE"/>
    <property type="match status" value="1"/>
</dbReference>
<dbReference type="Pfam" id="PF00132">
    <property type="entry name" value="Hexapep"/>
    <property type="match status" value="1"/>
</dbReference>
<dbReference type="Pfam" id="PF12804">
    <property type="entry name" value="NTP_transf_3"/>
    <property type="match status" value="1"/>
</dbReference>
<dbReference type="SUPFAM" id="SSF53448">
    <property type="entry name" value="Nucleotide-diphospho-sugar transferases"/>
    <property type="match status" value="1"/>
</dbReference>
<dbReference type="SUPFAM" id="SSF51161">
    <property type="entry name" value="Trimeric LpxA-like enzymes"/>
    <property type="match status" value="1"/>
</dbReference>
<dbReference type="PROSITE" id="PS00101">
    <property type="entry name" value="HEXAPEP_TRANSFERASES"/>
    <property type="match status" value="1"/>
</dbReference>
<keyword id="KW-0012">Acyltransferase</keyword>
<keyword id="KW-0133">Cell shape</keyword>
<keyword id="KW-0961">Cell wall biogenesis/degradation</keyword>
<keyword id="KW-0963">Cytoplasm</keyword>
<keyword id="KW-0460">Magnesium</keyword>
<keyword id="KW-0479">Metal-binding</keyword>
<keyword id="KW-0511">Multifunctional enzyme</keyword>
<keyword id="KW-0548">Nucleotidyltransferase</keyword>
<keyword id="KW-0573">Peptidoglycan synthesis</keyword>
<keyword id="KW-1185">Reference proteome</keyword>
<keyword id="KW-0677">Repeat</keyword>
<keyword id="KW-0808">Transferase</keyword>
<protein>
    <recommendedName>
        <fullName evidence="1">Bifunctional protein GlmU</fullName>
    </recommendedName>
    <domain>
        <recommendedName>
            <fullName evidence="1">UDP-N-acetylglucosamine pyrophosphorylase</fullName>
            <ecNumber evidence="1">2.7.7.23</ecNumber>
        </recommendedName>
        <alternativeName>
            <fullName evidence="1">N-acetylglucosamine-1-phosphate uridyltransferase</fullName>
        </alternativeName>
    </domain>
    <domain>
        <recommendedName>
            <fullName evidence="1">Glucosamine-1-phosphate N-acetyltransferase</fullName>
            <ecNumber evidence="1">2.3.1.157</ecNumber>
        </recommendedName>
    </domain>
</protein>
<comment type="function">
    <text evidence="1">Catalyzes the last two sequential reactions in the de novo biosynthetic pathway for UDP-N-acetylglucosamine (UDP-GlcNAc). The C-terminal domain catalyzes the transfer of acetyl group from acetyl coenzyme A to glucosamine-1-phosphate (GlcN-1-P) to produce N-acetylglucosamine-1-phosphate (GlcNAc-1-P), which is converted into UDP-GlcNAc by the transfer of uridine 5-monophosphate (from uridine 5-triphosphate), a reaction catalyzed by the N-terminal domain.</text>
</comment>
<comment type="catalytic activity">
    <reaction evidence="1">
        <text>alpha-D-glucosamine 1-phosphate + acetyl-CoA = N-acetyl-alpha-D-glucosamine 1-phosphate + CoA + H(+)</text>
        <dbReference type="Rhea" id="RHEA:13725"/>
        <dbReference type="ChEBI" id="CHEBI:15378"/>
        <dbReference type="ChEBI" id="CHEBI:57287"/>
        <dbReference type="ChEBI" id="CHEBI:57288"/>
        <dbReference type="ChEBI" id="CHEBI:57776"/>
        <dbReference type="ChEBI" id="CHEBI:58516"/>
        <dbReference type="EC" id="2.3.1.157"/>
    </reaction>
</comment>
<comment type="catalytic activity">
    <reaction evidence="1">
        <text>N-acetyl-alpha-D-glucosamine 1-phosphate + UTP + H(+) = UDP-N-acetyl-alpha-D-glucosamine + diphosphate</text>
        <dbReference type="Rhea" id="RHEA:13509"/>
        <dbReference type="ChEBI" id="CHEBI:15378"/>
        <dbReference type="ChEBI" id="CHEBI:33019"/>
        <dbReference type="ChEBI" id="CHEBI:46398"/>
        <dbReference type="ChEBI" id="CHEBI:57705"/>
        <dbReference type="ChEBI" id="CHEBI:57776"/>
        <dbReference type="EC" id="2.7.7.23"/>
    </reaction>
</comment>
<comment type="cofactor">
    <cofactor evidence="1">
        <name>Mg(2+)</name>
        <dbReference type="ChEBI" id="CHEBI:18420"/>
    </cofactor>
    <text evidence="1">Binds 1 Mg(2+) ion per subunit.</text>
</comment>
<comment type="pathway">
    <text evidence="1">Nucleotide-sugar biosynthesis; UDP-N-acetyl-alpha-D-glucosamine biosynthesis; N-acetyl-alpha-D-glucosamine 1-phosphate from alpha-D-glucosamine 6-phosphate (route II): step 2/2.</text>
</comment>
<comment type="pathway">
    <text evidence="1">Nucleotide-sugar biosynthesis; UDP-N-acetyl-alpha-D-glucosamine biosynthesis; UDP-N-acetyl-alpha-D-glucosamine from N-acetyl-alpha-D-glucosamine 1-phosphate: step 1/1.</text>
</comment>
<comment type="pathway">
    <text evidence="1">Bacterial outer membrane biogenesis; LPS lipid A biosynthesis.</text>
</comment>
<comment type="subunit">
    <text evidence="1">Homotrimer.</text>
</comment>
<comment type="subcellular location">
    <subcellularLocation>
        <location evidence="1">Cytoplasm</location>
    </subcellularLocation>
</comment>
<comment type="similarity">
    <text evidence="1">In the N-terminal section; belongs to the N-acetylglucosamine-1-phosphate uridyltransferase family.</text>
</comment>
<comment type="similarity">
    <text evidence="1">In the C-terminal section; belongs to the transferase hexapeptide repeat family.</text>
</comment>
<reference key="1">
    <citation type="journal article" date="2006" name="PLoS Biol.">
        <title>Metabolic complementarity and genomics of the dual bacterial symbiosis of sharpshooters.</title>
        <authorList>
            <person name="Wu D."/>
            <person name="Daugherty S.C."/>
            <person name="Van Aken S.E."/>
            <person name="Pai G.H."/>
            <person name="Watkins K.L."/>
            <person name="Khouri H."/>
            <person name="Tallon L.J."/>
            <person name="Zaborsky J.M."/>
            <person name="Dunbar H.E."/>
            <person name="Tran P.L."/>
            <person name="Moran N.A."/>
            <person name="Eisen J.A."/>
        </authorList>
    </citation>
    <scope>NUCLEOTIDE SEQUENCE [LARGE SCALE GENOMIC DNA]</scope>
</reference>
<feature type="chain" id="PRO_0000263119" description="Bifunctional protein GlmU">
    <location>
        <begin position="1"/>
        <end position="469"/>
    </location>
</feature>
<feature type="region of interest" description="Pyrophosphorylase" evidence="1">
    <location>
        <begin position="1"/>
        <end position="236"/>
    </location>
</feature>
<feature type="region of interest" description="Linker" evidence="1">
    <location>
        <begin position="237"/>
        <end position="257"/>
    </location>
</feature>
<feature type="region of interest" description="N-acetyltransferase" evidence="1">
    <location>
        <begin position="258"/>
        <end position="469"/>
    </location>
</feature>
<feature type="active site" description="Proton acceptor" evidence="1">
    <location>
        <position position="370"/>
    </location>
</feature>
<feature type="binding site" evidence="1">
    <location>
        <begin position="11"/>
        <end position="14"/>
    </location>
    <ligand>
        <name>UDP-N-acetyl-alpha-D-glucosamine</name>
        <dbReference type="ChEBI" id="CHEBI:57705"/>
    </ligand>
</feature>
<feature type="binding site" evidence="1">
    <location>
        <position position="25"/>
    </location>
    <ligand>
        <name>UDP-N-acetyl-alpha-D-glucosamine</name>
        <dbReference type="ChEBI" id="CHEBI:57705"/>
    </ligand>
</feature>
<feature type="binding site" evidence="1">
    <location>
        <position position="83"/>
    </location>
    <ligand>
        <name>UDP-N-acetyl-alpha-D-glucosamine</name>
        <dbReference type="ChEBI" id="CHEBI:57705"/>
    </ligand>
</feature>
<feature type="binding site" evidence="1">
    <location>
        <begin position="88"/>
        <end position="89"/>
    </location>
    <ligand>
        <name>UDP-N-acetyl-alpha-D-glucosamine</name>
        <dbReference type="ChEBI" id="CHEBI:57705"/>
    </ligand>
</feature>
<feature type="binding site" evidence="1">
    <location>
        <begin position="110"/>
        <end position="112"/>
    </location>
    <ligand>
        <name>UDP-N-acetyl-alpha-D-glucosamine</name>
        <dbReference type="ChEBI" id="CHEBI:57705"/>
    </ligand>
</feature>
<feature type="binding site" evidence="1">
    <location>
        <position position="112"/>
    </location>
    <ligand>
        <name>Mg(2+)</name>
        <dbReference type="ChEBI" id="CHEBI:18420"/>
    </ligand>
</feature>
<feature type="binding site" evidence="1">
    <location>
        <position position="147"/>
    </location>
    <ligand>
        <name>UDP-N-acetyl-alpha-D-glucosamine</name>
        <dbReference type="ChEBI" id="CHEBI:57705"/>
    </ligand>
</feature>
<feature type="binding site" evidence="1">
    <location>
        <position position="161"/>
    </location>
    <ligand>
        <name>UDP-N-acetyl-alpha-D-glucosamine</name>
        <dbReference type="ChEBI" id="CHEBI:57705"/>
    </ligand>
</feature>
<feature type="binding site" evidence="1">
    <location>
        <position position="176"/>
    </location>
    <ligand>
        <name>UDP-N-acetyl-alpha-D-glucosamine</name>
        <dbReference type="ChEBI" id="CHEBI:57705"/>
    </ligand>
</feature>
<feature type="binding site" evidence="1">
    <location>
        <position position="234"/>
    </location>
    <ligand>
        <name>Mg(2+)</name>
        <dbReference type="ChEBI" id="CHEBI:18420"/>
    </ligand>
</feature>
<feature type="binding site" evidence="1">
    <location>
        <position position="234"/>
    </location>
    <ligand>
        <name>UDP-N-acetyl-alpha-D-glucosamine</name>
        <dbReference type="ChEBI" id="CHEBI:57705"/>
    </ligand>
</feature>
<feature type="binding site" evidence="1">
    <location>
        <position position="340"/>
    </location>
    <ligand>
        <name>UDP-N-acetyl-alpha-D-glucosamine</name>
        <dbReference type="ChEBI" id="CHEBI:57705"/>
    </ligand>
</feature>
<feature type="binding site" evidence="1">
    <location>
        <position position="358"/>
    </location>
    <ligand>
        <name>UDP-N-acetyl-alpha-D-glucosamine</name>
        <dbReference type="ChEBI" id="CHEBI:57705"/>
    </ligand>
</feature>
<feature type="binding site" evidence="1">
    <location>
        <position position="373"/>
    </location>
    <ligand>
        <name>UDP-N-acetyl-alpha-D-glucosamine</name>
        <dbReference type="ChEBI" id="CHEBI:57705"/>
    </ligand>
</feature>
<feature type="binding site" evidence="1">
    <location>
        <position position="384"/>
    </location>
    <ligand>
        <name>UDP-N-acetyl-alpha-D-glucosamine</name>
        <dbReference type="ChEBI" id="CHEBI:57705"/>
    </ligand>
</feature>
<feature type="binding site" evidence="1">
    <location>
        <position position="387"/>
    </location>
    <ligand>
        <name>acetyl-CoA</name>
        <dbReference type="ChEBI" id="CHEBI:57288"/>
    </ligand>
</feature>
<feature type="binding site" evidence="1">
    <location>
        <begin position="393"/>
        <end position="394"/>
    </location>
    <ligand>
        <name>acetyl-CoA</name>
        <dbReference type="ChEBI" id="CHEBI:57288"/>
    </ligand>
</feature>
<feature type="binding site" evidence="1">
    <location>
        <position position="412"/>
    </location>
    <ligand>
        <name>acetyl-CoA</name>
        <dbReference type="ChEBI" id="CHEBI:57288"/>
    </ligand>
</feature>
<feature type="binding site" evidence="1">
    <location>
        <position position="430"/>
    </location>
    <ligand>
        <name>acetyl-CoA</name>
        <dbReference type="ChEBI" id="CHEBI:57288"/>
    </ligand>
</feature>
<feature type="binding site" evidence="1">
    <location>
        <position position="447"/>
    </location>
    <ligand>
        <name>acetyl-CoA</name>
        <dbReference type="ChEBI" id="CHEBI:57288"/>
    </ligand>
</feature>